<protein>
    <recommendedName>
        <fullName evidence="1">Large ribosomal subunit protein bL33c</fullName>
    </recommendedName>
    <alternativeName>
        <fullName evidence="2">50S ribosomal protein L33, chloroplastic</fullName>
    </alternativeName>
</protein>
<accession>B1NWH1</accession>
<sequence length="66" mass="7825">MAKGKDIRIRVILECTTCTRNSVNKKSTGISRYITQKNRHNTPSRLELRKFCRYCYKHTIHGEIKK</sequence>
<feature type="chain" id="PRO_0000356813" description="Large ribosomal subunit protein bL33c">
    <location>
        <begin position="1"/>
        <end position="66"/>
    </location>
</feature>
<reference key="1">
    <citation type="journal article" date="2008" name="Theor. Appl. Genet.">
        <title>The complete nucleotide sequence of the cassava (Manihot esculenta) chloroplast genome and the evolution of atpF in Malpighiales: RNA editing and multiple losses of a group II intron.</title>
        <authorList>
            <person name="Daniell H."/>
            <person name="Wurdack K.J."/>
            <person name="Kanagaraj A."/>
            <person name="Lee S.-B."/>
            <person name="Saski C."/>
            <person name="Jansen R.K."/>
        </authorList>
    </citation>
    <scope>NUCLEOTIDE SEQUENCE [LARGE SCALE GENOMIC DNA]</scope>
    <source>
        <strain>cv. TME3</strain>
    </source>
</reference>
<keyword id="KW-0150">Chloroplast</keyword>
<keyword id="KW-0934">Plastid</keyword>
<keyword id="KW-0687">Ribonucleoprotein</keyword>
<keyword id="KW-0689">Ribosomal protein</keyword>
<proteinExistence type="inferred from homology"/>
<evidence type="ECO:0000255" key="1">
    <source>
        <dbReference type="HAMAP-Rule" id="MF_00294"/>
    </source>
</evidence>
<evidence type="ECO:0000305" key="2"/>
<name>RK33_MANES</name>
<gene>
    <name evidence="1" type="primary">rpl33</name>
</gene>
<dbReference type="EMBL" id="EU117376">
    <property type="protein sequence ID" value="ABV66175.1"/>
    <property type="molecule type" value="Genomic_DNA"/>
</dbReference>
<dbReference type="RefSeq" id="YP_001718458.1">
    <property type="nucleotide sequence ID" value="NC_010433.1"/>
</dbReference>
<dbReference type="GeneID" id="6000070"/>
<dbReference type="KEGG" id="mesc:6000070"/>
<dbReference type="OrthoDB" id="361870at2759"/>
<dbReference type="GO" id="GO:0009507">
    <property type="term" value="C:chloroplast"/>
    <property type="evidence" value="ECO:0007669"/>
    <property type="project" value="UniProtKB-SubCell"/>
</dbReference>
<dbReference type="GO" id="GO:1990904">
    <property type="term" value="C:ribonucleoprotein complex"/>
    <property type="evidence" value="ECO:0007669"/>
    <property type="project" value="UniProtKB-KW"/>
</dbReference>
<dbReference type="GO" id="GO:0005840">
    <property type="term" value="C:ribosome"/>
    <property type="evidence" value="ECO:0007669"/>
    <property type="project" value="UniProtKB-KW"/>
</dbReference>
<dbReference type="GO" id="GO:0003735">
    <property type="term" value="F:structural constituent of ribosome"/>
    <property type="evidence" value="ECO:0007669"/>
    <property type="project" value="InterPro"/>
</dbReference>
<dbReference type="GO" id="GO:0006412">
    <property type="term" value="P:translation"/>
    <property type="evidence" value="ECO:0007669"/>
    <property type="project" value="UniProtKB-UniRule"/>
</dbReference>
<dbReference type="Gene3D" id="2.20.28.120">
    <property type="entry name" value="Ribosomal protein L33"/>
    <property type="match status" value="1"/>
</dbReference>
<dbReference type="HAMAP" id="MF_00294">
    <property type="entry name" value="Ribosomal_bL33"/>
    <property type="match status" value="1"/>
</dbReference>
<dbReference type="InterPro" id="IPR001705">
    <property type="entry name" value="Ribosomal_bL33"/>
</dbReference>
<dbReference type="InterPro" id="IPR018264">
    <property type="entry name" value="Ribosomal_bL33_CS"/>
</dbReference>
<dbReference type="InterPro" id="IPR038584">
    <property type="entry name" value="Ribosomal_bL33_sf"/>
</dbReference>
<dbReference type="InterPro" id="IPR011332">
    <property type="entry name" value="Ribosomal_zn-bd"/>
</dbReference>
<dbReference type="NCBIfam" id="NF001764">
    <property type="entry name" value="PRK00504.1"/>
    <property type="match status" value="1"/>
</dbReference>
<dbReference type="NCBIfam" id="NF001860">
    <property type="entry name" value="PRK00595.1"/>
    <property type="match status" value="1"/>
</dbReference>
<dbReference type="NCBIfam" id="TIGR01023">
    <property type="entry name" value="rpmG_bact"/>
    <property type="match status" value="1"/>
</dbReference>
<dbReference type="PANTHER" id="PTHR43168">
    <property type="entry name" value="50S RIBOSOMAL PROTEIN L33, CHLOROPLASTIC"/>
    <property type="match status" value="1"/>
</dbReference>
<dbReference type="PANTHER" id="PTHR43168:SF2">
    <property type="entry name" value="LARGE RIBOSOMAL SUBUNIT PROTEIN BL33C"/>
    <property type="match status" value="1"/>
</dbReference>
<dbReference type="Pfam" id="PF00471">
    <property type="entry name" value="Ribosomal_L33"/>
    <property type="match status" value="1"/>
</dbReference>
<dbReference type="SUPFAM" id="SSF57829">
    <property type="entry name" value="Zn-binding ribosomal proteins"/>
    <property type="match status" value="1"/>
</dbReference>
<dbReference type="PROSITE" id="PS00582">
    <property type="entry name" value="RIBOSOMAL_L33"/>
    <property type="match status" value="1"/>
</dbReference>
<organism>
    <name type="scientific">Manihot esculenta</name>
    <name type="common">Cassava</name>
    <name type="synonym">Jatropha manihot</name>
    <dbReference type="NCBI Taxonomy" id="3983"/>
    <lineage>
        <taxon>Eukaryota</taxon>
        <taxon>Viridiplantae</taxon>
        <taxon>Streptophyta</taxon>
        <taxon>Embryophyta</taxon>
        <taxon>Tracheophyta</taxon>
        <taxon>Spermatophyta</taxon>
        <taxon>Magnoliopsida</taxon>
        <taxon>eudicotyledons</taxon>
        <taxon>Gunneridae</taxon>
        <taxon>Pentapetalae</taxon>
        <taxon>rosids</taxon>
        <taxon>fabids</taxon>
        <taxon>Malpighiales</taxon>
        <taxon>Euphorbiaceae</taxon>
        <taxon>Crotonoideae</taxon>
        <taxon>Manihoteae</taxon>
        <taxon>Manihot</taxon>
    </lineage>
</organism>
<comment type="subcellular location">
    <subcellularLocation>
        <location>Plastid</location>
        <location>Chloroplast</location>
    </subcellularLocation>
</comment>
<comment type="similarity">
    <text evidence="1">Belongs to the bacterial ribosomal protein bL33 family.</text>
</comment>
<geneLocation type="chloroplast"/>